<feature type="initiator methionine" description="Removed" evidence="1">
    <location>
        <position position="1"/>
    </location>
</feature>
<feature type="chain" id="PRO_0000199243" description="Phycobilisome rod-core linker polypeptide cpcG">
    <location>
        <begin position="2"/>
        <end position="231"/>
    </location>
</feature>
<feature type="domain" description="PBS-linker" evidence="2">
    <location>
        <begin position="11"/>
        <end position="191"/>
    </location>
</feature>
<dbReference type="EMBL" id="U38804">
    <property type="protein sequence ID" value="AAC08251.1"/>
    <property type="molecule type" value="Genomic_DNA"/>
</dbReference>
<dbReference type="PIR" id="S73286">
    <property type="entry name" value="S73286"/>
</dbReference>
<dbReference type="RefSeq" id="NP_053975.1">
    <property type="nucleotide sequence ID" value="NC_000925.1"/>
</dbReference>
<dbReference type="SMR" id="P51365"/>
<dbReference type="GeneID" id="810005"/>
<dbReference type="GO" id="GO:0009535">
    <property type="term" value="C:chloroplast thylakoid membrane"/>
    <property type="evidence" value="ECO:0007669"/>
    <property type="project" value="UniProtKB-SubCell"/>
</dbReference>
<dbReference type="GO" id="GO:0030089">
    <property type="term" value="C:phycobilisome"/>
    <property type="evidence" value="ECO:0007669"/>
    <property type="project" value="UniProtKB-KW"/>
</dbReference>
<dbReference type="GO" id="GO:0015979">
    <property type="term" value="P:photosynthesis"/>
    <property type="evidence" value="ECO:0007669"/>
    <property type="project" value="UniProtKB-KW"/>
</dbReference>
<dbReference type="Gene3D" id="1.10.3130.20">
    <property type="entry name" value="Phycobilisome linker domain"/>
    <property type="match status" value="1"/>
</dbReference>
<dbReference type="InterPro" id="IPR001297">
    <property type="entry name" value="PBS_linker_dom"/>
</dbReference>
<dbReference type="InterPro" id="IPR038255">
    <property type="entry name" value="PBS_linker_sf"/>
</dbReference>
<dbReference type="InterPro" id="IPR016470">
    <property type="entry name" value="Phycobilisome"/>
</dbReference>
<dbReference type="PANTHER" id="PTHR34011">
    <property type="entry name" value="PHYCOBILISOME 32.1 KDA LINKER POLYPEPTIDE, PHYCOCYANIN-ASSOCIATED, ROD 2-RELATED"/>
    <property type="match status" value="1"/>
</dbReference>
<dbReference type="Pfam" id="PF00427">
    <property type="entry name" value="PBS_linker_poly"/>
    <property type="match status" value="1"/>
</dbReference>
<dbReference type="PIRSF" id="PIRSF005898">
    <property type="entry name" value="Phycobilisome_CpeC/CpcI"/>
    <property type="match status" value="1"/>
</dbReference>
<dbReference type="PROSITE" id="PS51445">
    <property type="entry name" value="PBS_LINKER"/>
    <property type="match status" value="1"/>
</dbReference>
<gene>
    <name type="primary">cpcG</name>
</gene>
<reference key="1">
    <citation type="journal article" date="1995" name="Plant Mol. Biol. Rep.">
        <title>Complete nucleotide sequence of the Porphyra purpurea chloroplast genome.</title>
        <authorList>
            <person name="Reith M.E."/>
            <person name="Munholland J."/>
        </authorList>
    </citation>
    <scope>NUCLEOTIDE SEQUENCE [LARGE SCALE GENOMIC DNA]</scope>
    <source>
        <strain>Avonport</strain>
    </source>
</reference>
<evidence type="ECO:0000250" key="1"/>
<evidence type="ECO:0000255" key="2">
    <source>
        <dbReference type="PROSITE-ProRule" id="PRU00775"/>
    </source>
</evidence>
<accession>P51365</accession>
<comment type="function">
    <text evidence="1">Rod-core linker protein required for attachment of phycocyanin to allophycocyanin in cores of phycobilisomes.</text>
</comment>
<comment type="function">
    <text evidence="1">Linker polypeptides determine the state of aggregation and the location of the disk-shaped phycobiliprotein units within the phycobilisome and modulate their spectroscopic properties in order to mediate a directed and optimal energy transfer.</text>
</comment>
<comment type="subunit">
    <text evidence="1">The phycobilisome is a hemidiscoidal structure that is composed of two distinct substructures: a core complex and a number of rods radiating from the core.</text>
</comment>
<comment type="subcellular location">
    <subcellularLocation>
        <location>Plastid</location>
        <location>Chloroplast</location>
    </subcellularLocation>
    <subcellularLocation>
        <location evidence="1">Plastid</location>
        <location evidence="1">Chloroplast thylakoid membrane</location>
        <topology evidence="1">Peripheral membrane protein</topology>
        <orientation evidence="1">Stromal side</orientation>
    </subcellularLocation>
</comment>
<comment type="similarity">
    <text evidence="2">Belongs to the phycobilisome linker protein family.</text>
</comment>
<name>PYG_PORPU</name>
<sequence>MSIPLLNYSLSTQNQRVDGYEVSPGEEQPRAYNTDNLPSAVEMDEVIWAAYRQIFSEHQILSSTSAPYLESQLRFNQIKVKDFIKGLILSESFRKLNYDVNNNYRFVEICVQRILGRDVYNEREKLAWSIVIASKGLESFINMLIESDEYEENFGDSIVPYQRRRIIAQRSKGEMPFNLKTPRYGADFKEKFGMPQFIWQGPVRQFRPQEQRPKAGDPALFLGMVNDLATV</sequence>
<protein>
    <recommendedName>
        <fullName>Phycobilisome rod-core linker polypeptide cpcG</fullName>
    </recommendedName>
</protein>
<proteinExistence type="inferred from homology"/>
<organism>
    <name type="scientific">Porphyra purpurea</name>
    <name type="common">Red seaweed</name>
    <name type="synonym">Ulva purpurea</name>
    <dbReference type="NCBI Taxonomy" id="2787"/>
    <lineage>
        <taxon>Eukaryota</taxon>
        <taxon>Rhodophyta</taxon>
        <taxon>Bangiophyceae</taxon>
        <taxon>Bangiales</taxon>
        <taxon>Bangiaceae</taxon>
        <taxon>Porphyra</taxon>
    </lineage>
</organism>
<geneLocation type="chloroplast"/>
<keyword id="KW-0042">Antenna complex</keyword>
<keyword id="KW-0150">Chloroplast</keyword>
<keyword id="KW-0472">Membrane</keyword>
<keyword id="KW-0602">Photosynthesis</keyword>
<keyword id="KW-0605">Phycobilisome</keyword>
<keyword id="KW-0934">Plastid</keyword>
<keyword id="KW-0793">Thylakoid</keyword>